<name>NENF_BOVIN</name>
<protein>
    <recommendedName>
        <fullName>Neudesin</fullName>
    </recommendedName>
    <alternativeName>
        <fullName>Neuron-derived neurotrophic factor</fullName>
    </alternativeName>
    <alternativeName>
        <fullName>SCIRP10-related protein</fullName>
    </alternativeName>
    <alternativeName>
        <fullName>Spinal cord injury-related protein 10</fullName>
    </alternativeName>
</protein>
<proteinExistence type="evidence at transcript level"/>
<comment type="function">
    <text evidence="2">Acts as a neurotrophic factor in postnatal mature neurons enhancing neuronal survival (By similarity). Promotes cell proliferation and neurogenesis in undifferentiated neural progenitor cells at the embryonic stage and inhibits differentiation of astrocytes (By similarity). Its neurotrophic activity is exerted via MAPK1/ERK2, MAPK3/ERK1 and AKT1/AKT pathways (By similarity). Neurotrophic activity is enhanced by binding to heme (By similarity). Also acts as an anorexigenic neurotrophic factor that contributes to energy balance (By similarity).</text>
</comment>
<comment type="subunit">
    <text evidence="3">Interacts with PINK1 and PARK7.</text>
</comment>
<comment type="subcellular location">
    <subcellularLocation>
        <location evidence="2">Secreted</location>
        <location evidence="2">Extracellular space</location>
    </subcellularLocation>
    <subcellularLocation>
        <location evidence="3">Mitochondrion</location>
    </subcellularLocation>
    <subcellularLocation>
        <location evidence="3">Endoplasmic reticulum</location>
    </subcellularLocation>
    <text evidence="3">Localized to mitochondria and endoplasmic reticulum by PINK1 and PARK7.</text>
</comment>
<comment type="domain">
    <text evidence="1">The cytochrome b5 heme-binding domain was proven to bind heme, although it lacks the conserved iron-binding His residue at position 79.</text>
</comment>
<comment type="miscellaneous">
    <text evidence="3">Non-classical progesterone receptors involved in extranuclear signaling are classified in 2 groups: the class II progestin and adipoQ receptor (PAQR) family (also called mPRs) (PAQR5, PAQR6, PAQR7, PAQR8 and PAQR9) and the b5-like heme/steroid-binding protein family (also called MAPRs) (PGRMC1, PGRMC2, NENF and CYB5D2).</text>
</comment>
<comment type="similarity">
    <text evidence="6">Belongs to the cytochrome b5 family. MAPR subfamily.</text>
</comment>
<keyword id="KW-0007">Acetylation</keyword>
<keyword id="KW-0256">Endoplasmic reticulum</keyword>
<keyword id="KW-0349">Heme</keyword>
<keyword id="KW-0408">Iron</keyword>
<keyword id="KW-0479">Metal-binding</keyword>
<keyword id="KW-0496">Mitochondrion</keyword>
<keyword id="KW-1185">Reference proteome</keyword>
<keyword id="KW-0964">Secreted</keyword>
<keyword id="KW-0732">Signal</keyword>
<organism>
    <name type="scientific">Bos taurus</name>
    <name type="common">Bovine</name>
    <dbReference type="NCBI Taxonomy" id="9913"/>
    <lineage>
        <taxon>Eukaryota</taxon>
        <taxon>Metazoa</taxon>
        <taxon>Chordata</taxon>
        <taxon>Craniata</taxon>
        <taxon>Vertebrata</taxon>
        <taxon>Euteleostomi</taxon>
        <taxon>Mammalia</taxon>
        <taxon>Eutheria</taxon>
        <taxon>Laurasiatheria</taxon>
        <taxon>Artiodactyla</taxon>
        <taxon>Ruminantia</taxon>
        <taxon>Pecora</taxon>
        <taxon>Bovidae</taxon>
        <taxon>Bovinae</taxon>
        <taxon>Bos</taxon>
    </lineage>
</organism>
<gene>
    <name type="primary">NENF</name>
</gene>
<feature type="signal peptide" evidence="4">
    <location>
        <begin position="1"/>
        <end position="28"/>
    </location>
</feature>
<feature type="chain" id="PRO_0000350625" description="Neudesin">
    <location>
        <begin position="29"/>
        <end position="169"/>
    </location>
</feature>
<feature type="domain" description="Cytochrome b5 heme-binding">
    <location>
        <begin position="41"/>
        <end position="126"/>
    </location>
</feature>
<feature type="region of interest" description="Disordered" evidence="5">
    <location>
        <begin position="148"/>
        <end position="169"/>
    </location>
</feature>
<feature type="compositionally biased region" description="Basic and acidic residues" evidence="5">
    <location>
        <begin position="155"/>
        <end position="169"/>
    </location>
</feature>
<feature type="modified residue" description="N6-acetyllysine" evidence="3">
    <location>
        <position position="133"/>
    </location>
</feature>
<reference key="1">
    <citation type="submission" date="2006-05" db="EMBL/GenBank/DDBJ databases">
        <authorList>
            <consortium name="NIH - Mammalian Gene Collection (MGC) project"/>
        </authorList>
    </citation>
    <scope>NUCLEOTIDE SEQUENCE [LARGE SCALE MRNA]</scope>
    <source>
        <strain>Hereford</strain>
        <tissue>Hippocampus</tissue>
    </source>
</reference>
<accession>Q1JQA5</accession>
<dbReference type="EMBL" id="BC116106">
    <property type="protein sequence ID" value="AAI16107.1"/>
    <property type="molecule type" value="mRNA"/>
</dbReference>
<dbReference type="RefSeq" id="NP_001069887.1">
    <property type="nucleotide sequence ID" value="NM_001076419.1"/>
</dbReference>
<dbReference type="SMR" id="Q1JQA5"/>
<dbReference type="FunCoup" id="Q1JQA5">
    <property type="interactions" value="441"/>
</dbReference>
<dbReference type="STRING" id="9913.ENSBTAP00000001007"/>
<dbReference type="PaxDb" id="9913-ENSBTAP00000001007"/>
<dbReference type="Ensembl" id="ENSBTAT00000001007.5">
    <property type="protein sequence ID" value="ENSBTAP00000001007.3"/>
    <property type="gene ID" value="ENSBTAG00000000759.5"/>
</dbReference>
<dbReference type="GeneID" id="616334"/>
<dbReference type="KEGG" id="bta:616334"/>
<dbReference type="CTD" id="29937"/>
<dbReference type="VEuPathDB" id="HostDB:ENSBTAG00000000759"/>
<dbReference type="VGNC" id="VGNC:32006">
    <property type="gene designation" value="NENF"/>
</dbReference>
<dbReference type="eggNOG" id="KOG1110">
    <property type="taxonomic scope" value="Eukaryota"/>
</dbReference>
<dbReference type="GeneTree" id="ENSGT00940000162504"/>
<dbReference type="HOGENOM" id="CLU_134788_0_0_1"/>
<dbReference type="InParanoid" id="Q1JQA5"/>
<dbReference type="OMA" id="VGYTAQR"/>
<dbReference type="OrthoDB" id="547796at2759"/>
<dbReference type="TreeFam" id="TF332131"/>
<dbReference type="Proteomes" id="UP000009136">
    <property type="component" value="Chromosome 16"/>
</dbReference>
<dbReference type="Bgee" id="ENSBTAG00000000759">
    <property type="expression patterns" value="Expressed in laryngeal cartilage and 106 other cell types or tissues"/>
</dbReference>
<dbReference type="GO" id="GO:0012505">
    <property type="term" value="C:endomembrane system"/>
    <property type="evidence" value="ECO:0000318"/>
    <property type="project" value="GO_Central"/>
</dbReference>
<dbReference type="GO" id="GO:0005783">
    <property type="term" value="C:endoplasmic reticulum"/>
    <property type="evidence" value="ECO:0000318"/>
    <property type="project" value="GO_Central"/>
</dbReference>
<dbReference type="GO" id="GO:0005615">
    <property type="term" value="C:extracellular space"/>
    <property type="evidence" value="ECO:0007669"/>
    <property type="project" value="Ensembl"/>
</dbReference>
<dbReference type="GO" id="GO:0016020">
    <property type="term" value="C:membrane"/>
    <property type="evidence" value="ECO:0000318"/>
    <property type="project" value="GO_Central"/>
</dbReference>
<dbReference type="GO" id="GO:0005739">
    <property type="term" value="C:mitochondrion"/>
    <property type="evidence" value="ECO:0007669"/>
    <property type="project" value="UniProtKB-SubCell"/>
</dbReference>
<dbReference type="GO" id="GO:0008083">
    <property type="term" value="F:growth factor activity"/>
    <property type="evidence" value="ECO:0007669"/>
    <property type="project" value="Ensembl"/>
</dbReference>
<dbReference type="GO" id="GO:0046872">
    <property type="term" value="F:metal ion binding"/>
    <property type="evidence" value="ECO:0007669"/>
    <property type="project" value="UniProtKB-KW"/>
</dbReference>
<dbReference type="GO" id="GO:0000165">
    <property type="term" value="P:MAPK cascade"/>
    <property type="evidence" value="ECO:0007669"/>
    <property type="project" value="Ensembl"/>
</dbReference>
<dbReference type="GO" id="GO:0032099">
    <property type="term" value="P:negative regulation of appetite"/>
    <property type="evidence" value="ECO:0000250"/>
    <property type="project" value="UniProtKB"/>
</dbReference>
<dbReference type="GO" id="GO:0043410">
    <property type="term" value="P:positive regulation of MAPK cascade"/>
    <property type="evidence" value="ECO:0007669"/>
    <property type="project" value="Ensembl"/>
</dbReference>
<dbReference type="FunFam" id="3.10.120.10:FF:000013">
    <property type="entry name" value="Neudesin"/>
    <property type="match status" value="1"/>
</dbReference>
<dbReference type="Gene3D" id="3.10.120.10">
    <property type="entry name" value="Cytochrome b5-like heme/steroid binding domain"/>
    <property type="match status" value="1"/>
</dbReference>
<dbReference type="InterPro" id="IPR001199">
    <property type="entry name" value="Cyt_B5-like_heme/steroid-bd"/>
</dbReference>
<dbReference type="InterPro" id="IPR036400">
    <property type="entry name" value="Cyt_B5-like_heme/steroid_sf"/>
</dbReference>
<dbReference type="InterPro" id="IPR050577">
    <property type="entry name" value="MAPR/NEUFC/NENF-like"/>
</dbReference>
<dbReference type="PANTHER" id="PTHR10281">
    <property type="entry name" value="MEMBRANE-ASSOCIATED PROGESTERONE RECEPTOR COMPONENT-RELATED"/>
    <property type="match status" value="1"/>
</dbReference>
<dbReference type="PANTHER" id="PTHR10281:SF72">
    <property type="entry name" value="NEUDESIN"/>
    <property type="match status" value="1"/>
</dbReference>
<dbReference type="Pfam" id="PF00173">
    <property type="entry name" value="Cyt-b5"/>
    <property type="match status" value="1"/>
</dbReference>
<dbReference type="SMART" id="SM01117">
    <property type="entry name" value="Cyt-b5"/>
    <property type="match status" value="1"/>
</dbReference>
<dbReference type="SUPFAM" id="SSF55856">
    <property type="entry name" value="Cytochrome b5-like heme/steroid binding domain"/>
    <property type="match status" value="1"/>
</dbReference>
<evidence type="ECO:0000250" key="1"/>
<evidence type="ECO:0000250" key="2">
    <source>
        <dbReference type="UniProtKB" id="Q9CQ45"/>
    </source>
</evidence>
<evidence type="ECO:0000250" key="3">
    <source>
        <dbReference type="UniProtKB" id="Q9UMX5"/>
    </source>
</evidence>
<evidence type="ECO:0000255" key="4"/>
<evidence type="ECO:0000256" key="5">
    <source>
        <dbReference type="SAM" id="MobiDB-lite"/>
    </source>
</evidence>
<evidence type="ECO:0000305" key="6"/>
<sequence length="169" mass="18313">MAGPAPGRRLVALALIVALAVGLPTAGAGQAPRPAERGPPVRLFTEEELARYGGEEEDQPIYMAVKGVVFDVTSGKEFYGRGAPYNALTGKDSTRGVAKMSLDPADLTHDTTGLTAEELESLDDVFTRVYKAKYPIVGYTARRILNEDGSPNLDFKPEDQPHFDIKDEF</sequence>